<protein>
    <recommendedName>
        <fullName evidence="2">Glycine amidinotransferase, mitochondrial</fullName>
        <ecNumber evidence="2">2.1.4.1</ecNumber>
    </recommendedName>
    <alternativeName>
        <fullName evidence="2">L-arginine:glycine amidinotransferase</fullName>
    </alternativeName>
    <alternativeName>
        <fullName evidence="2">Transamidinase</fullName>
    </alternativeName>
</protein>
<gene>
    <name evidence="2" type="primary">GATM</name>
    <name evidence="8" type="synonym">AT</name>
</gene>
<feature type="transit peptide" description="Mitochondrion" evidence="3">
    <location>
        <begin position="1"/>
        <end position="37"/>
    </location>
</feature>
<feature type="chain" id="PRO_0000399095" description="Glycine amidinotransferase, mitochondrial" evidence="3">
    <location>
        <begin position="38"/>
        <end position="422"/>
    </location>
</feature>
<feature type="active site" evidence="2">
    <location>
        <position position="253"/>
    </location>
</feature>
<feature type="active site" evidence="2">
    <location>
        <position position="302"/>
    </location>
</feature>
<feature type="active site" description="Amidino-cysteine intermediate" evidence="2">
    <location>
        <position position="406"/>
    </location>
</feature>
<feature type="modified residue" description="Phosphothreonine" evidence="4">
    <location>
        <position position="416"/>
    </location>
</feature>
<feature type="sequence conflict" description="In Ref. 2; AAF61951." evidence="7" ref="2">
    <original>H</original>
    <variation>N</variation>
    <location>
        <position position="18"/>
    </location>
</feature>
<feature type="sequence conflict" description="In Ref. 2; AAF61951." evidence="7" ref="2">
    <original>I</original>
    <variation>M</variation>
    <location>
        <position position="20"/>
    </location>
</feature>
<feature type="sequence conflict" description="In Ref. 2; AAF61951." evidence="7" ref="2">
    <original>A</original>
    <variation>P</variation>
    <location>
        <position position="50"/>
    </location>
</feature>
<feature type="sequence conflict" description="In Ref. 2; AAF61951." evidence="7" ref="2">
    <original>S</original>
    <variation>P</variation>
    <location>
        <position position="149"/>
    </location>
</feature>
<reference evidence="7" key="1">
    <citation type="journal article" date="2002" name="Curr. Biol.">
        <title>A comprehensive collection of chicken cDNAs.</title>
        <authorList>
            <person name="Boardman P.E."/>
            <person name="Sanz-Ezquerro J."/>
            <person name="Overton I.M."/>
            <person name="Burt D.W."/>
            <person name="Bosch E."/>
            <person name="Fong W.T."/>
            <person name="Tickle C."/>
            <person name="Brown W.R."/>
            <person name="Wilson S.A."/>
            <person name="Hubbard S.J."/>
        </authorList>
    </citation>
    <scope>NUCLEOTIDE SEQUENCE [LARGE SCALE MRNA] OF 1-198</scope>
    <source>
        <strain evidence="7">White Leghorn Hisex</strain>
    </source>
</reference>
<reference evidence="7 8" key="2">
    <citation type="journal article" date="2001" name="Mol. Cell. Biochem.">
        <title>Estrogen modulates the expression of L-arginine:glycine amidinotransferase in chick liver.</title>
        <authorList>
            <person name="Zhu Y."/>
            <person name="Evans M.I."/>
        </authorList>
    </citation>
    <scope>NUCLEOTIDE SEQUENCE [MRNA] OF 13-422</scope>
    <scope>INDUCTION</scope>
</reference>
<dbReference type="EC" id="2.1.4.1" evidence="2"/>
<dbReference type="EMBL" id="BU129729">
    <property type="status" value="NOT_ANNOTATED_CDS"/>
    <property type="molecule type" value="mRNA"/>
</dbReference>
<dbReference type="EMBL" id="AF237950">
    <property type="protein sequence ID" value="AAF61951.2"/>
    <property type="status" value="ALT_INIT"/>
    <property type="molecule type" value="mRNA"/>
</dbReference>
<dbReference type="RefSeq" id="NP_990076.1">
    <property type="nucleotide sequence ID" value="NM_204745.1"/>
</dbReference>
<dbReference type="SMR" id="Q9I9K9"/>
<dbReference type="FunCoup" id="Q9I9K9">
    <property type="interactions" value="1313"/>
</dbReference>
<dbReference type="STRING" id="9031.ENSGALP00000037948"/>
<dbReference type="PaxDb" id="9031-ENSGALP00000037948"/>
<dbReference type="KEGG" id="gga:395504"/>
<dbReference type="VEuPathDB" id="HostDB:geneid_395504"/>
<dbReference type="eggNOG" id="ENOG502QVCA">
    <property type="taxonomic scope" value="Eukaryota"/>
</dbReference>
<dbReference type="InParanoid" id="Q9I9K9"/>
<dbReference type="OrthoDB" id="10264242at2759"/>
<dbReference type="PhylomeDB" id="Q9I9K9"/>
<dbReference type="BRENDA" id="2.1.4.1">
    <property type="organism ID" value="1306"/>
</dbReference>
<dbReference type="UniPathway" id="UPA00104">
    <property type="reaction ID" value="UER00579"/>
</dbReference>
<dbReference type="PRO" id="PR:Q9I9K9"/>
<dbReference type="Proteomes" id="UP000000539">
    <property type="component" value="Unassembled WGS sequence"/>
</dbReference>
<dbReference type="GO" id="GO:0005743">
    <property type="term" value="C:mitochondrial inner membrane"/>
    <property type="evidence" value="ECO:0007669"/>
    <property type="project" value="UniProtKB-SubCell"/>
</dbReference>
<dbReference type="GO" id="GO:0005758">
    <property type="term" value="C:mitochondrial intermembrane space"/>
    <property type="evidence" value="ECO:0000318"/>
    <property type="project" value="GO_Central"/>
</dbReference>
<dbReference type="GO" id="GO:0015068">
    <property type="term" value="F:glycine amidinotransferase activity"/>
    <property type="evidence" value="ECO:0000250"/>
    <property type="project" value="UniProtKB"/>
</dbReference>
<dbReference type="GO" id="GO:0006601">
    <property type="term" value="P:creatine biosynthetic process"/>
    <property type="evidence" value="ECO:0000318"/>
    <property type="project" value="GO_Central"/>
</dbReference>
<dbReference type="CDD" id="cd21136">
    <property type="entry name" value="amidinotransferase_AGAT-like"/>
    <property type="match status" value="1"/>
</dbReference>
<dbReference type="FunFam" id="3.75.10.10:FF:000005">
    <property type="entry name" value="Glycine amidinotransferase, mitochondrial"/>
    <property type="match status" value="1"/>
</dbReference>
<dbReference type="Gene3D" id="3.75.10.10">
    <property type="entry name" value="L-arginine/glycine Amidinotransferase, Chain A"/>
    <property type="match status" value="1"/>
</dbReference>
<dbReference type="InterPro" id="IPR033195">
    <property type="entry name" value="AmidinoTrfase"/>
</dbReference>
<dbReference type="PANTHER" id="PTHR10488">
    <property type="entry name" value="GLYCINE AMIDINOTRANSFERASE, MITOCHONDRIAL"/>
    <property type="match status" value="1"/>
</dbReference>
<dbReference type="PANTHER" id="PTHR10488:SF1">
    <property type="entry name" value="GLYCINE AMIDINOTRANSFERASE, MITOCHONDRIAL"/>
    <property type="match status" value="1"/>
</dbReference>
<dbReference type="SUPFAM" id="SSF55909">
    <property type="entry name" value="Pentein"/>
    <property type="match status" value="1"/>
</dbReference>
<proteinExistence type="evidence at transcript level"/>
<sequence>MLRVRCLRGGSRGAEAAHFIGSRLGRAFTGWVQRSLQSTQAAAASQNRCAAEDKAQSPAPKECPVCSYNEWDPLEEVIVGRAENACVPPFSVEVKANTYEKYWGFYQKFGGESFPKDHVKKAIAEIEEMCNILKKEGVIVKRPDPIDWSVKYRTPDFESTGMYAAMPRDILLVVGNEIIEAPMAWRARFFEYRAYRRIIKDYFNNGAKWTTAPKPTMADELYDQDYPIRSVEDRHKLAAQGKFVTTEFEPCFDAADFIRAGRDIFVQRSQVTNYMGIEWMRRHLAPDYRVHVISFKDPNPMHIDTTFNIIGPGLVLSNPDRPCHQIELFKKAGWTVIHPPVPLIPDDHPLWMSSKWLSMNVLMLDEKRVMVDANETSIQKMFENLGISTIKVNIRHANSLGGGFHCWTCDIRRRGTLQSYFD</sequence>
<evidence type="ECO:0000250" key="1"/>
<evidence type="ECO:0000250" key="2">
    <source>
        <dbReference type="UniProtKB" id="P50440"/>
    </source>
</evidence>
<evidence type="ECO:0000250" key="3">
    <source>
        <dbReference type="UniProtKB" id="P50441"/>
    </source>
</evidence>
<evidence type="ECO:0000250" key="4">
    <source>
        <dbReference type="UniProtKB" id="Q9D964"/>
    </source>
</evidence>
<evidence type="ECO:0000255" key="5"/>
<evidence type="ECO:0000269" key="6">
    <source>
    </source>
</evidence>
<evidence type="ECO:0000305" key="7"/>
<evidence type="ECO:0000312" key="8">
    <source>
        <dbReference type="EMBL" id="AAF61951.2"/>
    </source>
</evidence>
<organism>
    <name type="scientific">Gallus gallus</name>
    <name type="common">Chicken</name>
    <dbReference type="NCBI Taxonomy" id="9031"/>
    <lineage>
        <taxon>Eukaryota</taxon>
        <taxon>Metazoa</taxon>
        <taxon>Chordata</taxon>
        <taxon>Craniata</taxon>
        <taxon>Vertebrata</taxon>
        <taxon>Euteleostomi</taxon>
        <taxon>Archelosauria</taxon>
        <taxon>Archosauria</taxon>
        <taxon>Dinosauria</taxon>
        <taxon>Saurischia</taxon>
        <taxon>Theropoda</taxon>
        <taxon>Coelurosauria</taxon>
        <taxon>Aves</taxon>
        <taxon>Neognathae</taxon>
        <taxon>Galloanserae</taxon>
        <taxon>Galliformes</taxon>
        <taxon>Phasianidae</taxon>
        <taxon>Phasianinae</taxon>
        <taxon>Gallus</taxon>
    </lineage>
</organism>
<keyword id="KW-0472">Membrane</keyword>
<keyword id="KW-0496">Mitochondrion</keyword>
<keyword id="KW-0999">Mitochondrion inner membrane</keyword>
<keyword id="KW-0597">Phosphoprotein</keyword>
<keyword id="KW-1185">Reference proteome</keyword>
<keyword id="KW-0808">Transferase</keyword>
<keyword id="KW-0809">Transit peptide</keyword>
<comment type="function">
    <text evidence="1">Catalyzes the biosynthesis of guanidinoacetate, the immediate precursor of creatine. Creatine plays a vital role in energy metabolism in muscle tissues. May play a role in embryonic and central nervous system development (By similarity).</text>
</comment>
<comment type="catalytic activity">
    <reaction evidence="2">
        <text>L-arginine + glycine = guanidinoacetate + L-ornithine</text>
        <dbReference type="Rhea" id="RHEA:13201"/>
        <dbReference type="ChEBI" id="CHEBI:32682"/>
        <dbReference type="ChEBI" id="CHEBI:46911"/>
        <dbReference type="ChEBI" id="CHEBI:57305"/>
        <dbReference type="ChEBI" id="CHEBI:57742"/>
        <dbReference type="EC" id="2.1.4.1"/>
    </reaction>
</comment>
<comment type="pathway">
    <text evidence="2">Amine and polyamine biosynthesis; creatine biosynthesis; creatine from L-arginine and glycine: step 1/2.</text>
</comment>
<comment type="subunit">
    <text evidence="2">Homodimer.</text>
</comment>
<comment type="subcellular location">
    <subcellularLocation>
        <location evidence="2">Mitochondrion inner membrane</location>
    </subcellularLocation>
</comment>
<comment type="induction">
    <text evidence="6">Transiently induced by estrogen, with levels peaking an hour after hormone injection.</text>
</comment>
<comment type="similarity">
    <text evidence="5">Belongs to the amidinotransferase family.</text>
</comment>
<comment type="sequence caution" evidence="7">
    <conflict type="erroneous initiation">
        <sequence resource="EMBL-CDS" id="AAF61951"/>
    </conflict>
    <text>Truncated N-terminus.</text>
</comment>
<name>GATM_CHICK</name>
<accession>Q9I9K9</accession>